<organism>
    <name type="scientific">Pongo abelii</name>
    <name type="common">Sumatran orangutan</name>
    <name type="synonym">Pongo pygmaeus abelii</name>
    <dbReference type="NCBI Taxonomy" id="9601"/>
    <lineage>
        <taxon>Eukaryota</taxon>
        <taxon>Metazoa</taxon>
        <taxon>Chordata</taxon>
        <taxon>Craniata</taxon>
        <taxon>Vertebrata</taxon>
        <taxon>Euteleostomi</taxon>
        <taxon>Mammalia</taxon>
        <taxon>Eutheria</taxon>
        <taxon>Euarchontoglires</taxon>
        <taxon>Primates</taxon>
        <taxon>Haplorrhini</taxon>
        <taxon>Catarrhini</taxon>
        <taxon>Hominidae</taxon>
        <taxon>Pongo</taxon>
    </lineage>
</organism>
<feature type="chain" id="PRO_0000260750" description="Ras-related protein Rab-8B">
    <location>
        <begin position="1"/>
        <end position="204"/>
    </location>
</feature>
<feature type="propeptide" id="PRO_0000370802" description="Removed in mature form" evidence="7">
    <location>
        <begin position="205"/>
        <end position="207"/>
    </location>
</feature>
<feature type="short sequence motif" description="Switch 1" evidence="4">
    <location>
        <begin position="31"/>
        <end position="45"/>
    </location>
</feature>
<feature type="short sequence motif" description="Switch 2" evidence="4">
    <location>
        <begin position="63"/>
        <end position="80"/>
    </location>
</feature>
<feature type="binding site" evidence="2">
    <location>
        <position position="17"/>
    </location>
    <ligand>
        <name>GTP</name>
        <dbReference type="ChEBI" id="CHEBI:37565"/>
    </ligand>
</feature>
<feature type="binding site" evidence="2">
    <location>
        <position position="18"/>
    </location>
    <ligand>
        <name>GTP</name>
        <dbReference type="ChEBI" id="CHEBI:37565"/>
    </ligand>
</feature>
<feature type="binding site" evidence="2">
    <location>
        <position position="19"/>
    </location>
    <ligand>
        <name>GTP</name>
        <dbReference type="ChEBI" id="CHEBI:37565"/>
    </ligand>
</feature>
<feature type="binding site" evidence="2">
    <location>
        <position position="20"/>
    </location>
    <ligand>
        <name>GTP</name>
        <dbReference type="ChEBI" id="CHEBI:37565"/>
    </ligand>
</feature>
<feature type="binding site" evidence="2">
    <location>
        <position position="21"/>
    </location>
    <ligand>
        <name>GTP</name>
        <dbReference type="ChEBI" id="CHEBI:37565"/>
    </ligand>
</feature>
<feature type="binding site" evidence="2">
    <location>
        <position position="22"/>
    </location>
    <ligand>
        <name>GTP</name>
        <dbReference type="ChEBI" id="CHEBI:37565"/>
    </ligand>
</feature>
<feature type="binding site" evidence="2">
    <location>
        <position position="22"/>
    </location>
    <ligand>
        <name>Mg(2+)</name>
        <dbReference type="ChEBI" id="CHEBI:18420"/>
    </ligand>
</feature>
<feature type="binding site" evidence="2">
    <location>
        <position position="23"/>
    </location>
    <ligand>
        <name>GTP</name>
        <dbReference type="ChEBI" id="CHEBI:37565"/>
    </ligand>
</feature>
<feature type="binding site" evidence="2">
    <location>
        <position position="35"/>
    </location>
    <ligand>
        <name>GTP</name>
        <dbReference type="ChEBI" id="CHEBI:37565"/>
    </ligand>
</feature>
<feature type="binding site" evidence="2">
    <location>
        <position position="39"/>
    </location>
    <ligand>
        <name>GTP</name>
        <dbReference type="ChEBI" id="CHEBI:37565"/>
    </ligand>
</feature>
<feature type="binding site" evidence="2">
    <location>
        <position position="40"/>
    </location>
    <ligand>
        <name>GTP</name>
        <dbReference type="ChEBI" id="CHEBI:37565"/>
    </ligand>
</feature>
<feature type="binding site" evidence="2">
    <location>
        <position position="40"/>
    </location>
    <ligand>
        <name>Mg(2+)</name>
        <dbReference type="ChEBI" id="CHEBI:18420"/>
    </ligand>
</feature>
<feature type="binding site" evidence="2">
    <location>
        <position position="63"/>
    </location>
    <ligand>
        <name>Mg(2+)</name>
        <dbReference type="ChEBI" id="CHEBI:18420"/>
    </ligand>
</feature>
<feature type="binding site" evidence="2">
    <location>
        <position position="66"/>
    </location>
    <ligand>
        <name>GTP</name>
        <dbReference type="ChEBI" id="CHEBI:37565"/>
    </ligand>
</feature>
<feature type="binding site" evidence="2">
    <location>
        <position position="121"/>
    </location>
    <ligand>
        <name>GTP</name>
        <dbReference type="ChEBI" id="CHEBI:37565"/>
    </ligand>
</feature>
<feature type="binding site" evidence="2">
    <location>
        <position position="122"/>
    </location>
    <ligand>
        <name>GTP</name>
        <dbReference type="ChEBI" id="CHEBI:37565"/>
    </ligand>
</feature>
<feature type="binding site" evidence="2">
    <location>
        <position position="124"/>
    </location>
    <ligand>
        <name>GTP</name>
        <dbReference type="ChEBI" id="CHEBI:37565"/>
    </ligand>
</feature>
<feature type="binding site" evidence="2">
    <location>
        <position position="152"/>
    </location>
    <ligand>
        <name>GTP</name>
        <dbReference type="ChEBI" id="CHEBI:37565"/>
    </ligand>
</feature>
<feature type="binding site" evidence="2">
    <location>
        <position position="153"/>
    </location>
    <ligand>
        <name>GTP</name>
        <dbReference type="ChEBI" id="CHEBI:37565"/>
    </ligand>
</feature>
<feature type="modified residue" description="Phosphothreonine" evidence="6">
    <location>
        <position position="72"/>
    </location>
</feature>
<feature type="modified residue" description="Phosphoserine" evidence="3">
    <location>
        <position position="180"/>
    </location>
</feature>
<feature type="modified residue" description="Cysteine methyl ester" evidence="7">
    <location>
        <position position="204"/>
    </location>
</feature>
<feature type="lipid moiety-binding region" description="S-geranylgeranyl cysteine" evidence="1">
    <location>
        <position position="204"/>
    </location>
</feature>
<reference key="1">
    <citation type="submission" date="2004-11" db="EMBL/GenBank/DDBJ databases">
        <authorList>
            <consortium name="The German cDNA consortium"/>
        </authorList>
    </citation>
    <scope>NUCLEOTIDE SEQUENCE [LARGE SCALE MRNA]</scope>
    <source>
        <tissue>Kidney</tissue>
    </source>
</reference>
<keyword id="KW-1003">Cell membrane</keyword>
<keyword id="KW-0968">Cytoplasmic vesicle</keyword>
<keyword id="KW-0967">Endosome</keyword>
<keyword id="KW-0342">GTP-binding</keyword>
<keyword id="KW-0378">Hydrolase</keyword>
<keyword id="KW-0449">Lipoprotein</keyword>
<keyword id="KW-0460">Magnesium</keyword>
<keyword id="KW-0472">Membrane</keyword>
<keyword id="KW-0479">Metal-binding</keyword>
<keyword id="KW-0488">Methylation</keyword>
<keyword id="KW-0547">Nucleotide-binding</keyword>
<keyword id="KW-0597">Phosphoprotein</keyword>
<keyword id="KW-0636">Prenylation</keyword>
<keyword id="KW-0653">Protein transport</keyword>
<keyword id="KW-1185">Reference proteome</keyword>
<keyword id="KW-0813">Transport</keyword>
<sequence>MAKTYDYLFKLLLIGDSGVGKTCLLFRFSEDAFNTTFISTIGIDFKIRTIELDGKKIKLQIWDTAGQERFRTITTAYYRGAMGIMLVYDITNEKSFDNIKNWIRNIEEHASSDVERMILGNKCDMNDKRQVSKERGEKLAIDYGIKFLETSAKSSTNVEEAFFTLARDIMTKLNRKMNDSNSAGAGGPVKITENRSKKTSFFRCLLL</sequence>
<protein>
    <recommendedName>
        <fullName>Ras-related protein Rab-8B</fullName>
        <ecNumber evidence="2">3.6.5.2</ecNumber>
    </recommendedName>
</protein>
<proteinExistence type="evidence at transcript level"/>
<evidence type="ECO:0000250" key="1"/>
<evidence type="ECO:0000250" key="2">
    <source>
        <dbReference type="UniProtKB" id="P61006"/>
    </source>
</evidence>
<evidence type="ECO:0000250" key="3">
    <source>
        <dbReference type="UniProtKB" id="P61028"/>
    </source>
</evidence>
<evidence type="ECO:0000250" key="4">
    <source>
        <dbReference type="UniProtKB" id="P62820"/>
    </source>
</evidence>
<evidence type="ECO:0000250" key="5">
    <source>
        <dbReference type="UniProtKB" id="P70550"/>
    </source>
</evidence>
<evidence type="ECO:0000250" key="6">
    <source>
        <dbReference type="UniProtKB" id="Q92930"/>
    </source>
</evidence>
<evidence type="ECO:0000255" key="7"/>
<evidence type="ECO:0000305" key="8"/>
<name>RAB8B_PONAB</name>
<gene>
    <name type="primary">RAB8B</name>
</gene>
<dbReference type="EC" id="3.6.5.2" evidence="2"/>
<dbReference type="EMBL" id="CR857602">
    <property type="protein sequence ID" value="CAH89878.1"/>
    <property type="molecule type" value="mRNA"/>
</dbReference>
<dbReference type="RefSeq" id="NP_001124875.1">
    <property type="nucleotide sequence ID" value="NM_001131403.1"/>
</dbReference>
<dbReference type="SMR" id="Q5REC9"/>
<dbReference type="FunCoup" id="Q5REC9">
    <property type="interactions" value="2583"/>
</dbReference>
<dbReference type="STRING" id="9601.ENSPPYP00000024284"/>
<dbReference type="GeneID" id="100171739"/>
<dbReference type="KEGG" id="pon:100171739"/>
<dbReference type="CTD" id="51762"/>
<dbReference type="eggNOG" id="KOG0078">
    <property type="taxonomic scope" value="Eukaryota"/>
</dbReference>
<dbReference type="HOGENOM" id="CLU_041217_23_1_1"/>
<dbReference type="InParanoid" id="Q5REC9"/>
<dbReference type="OrthoDB" id="9989112at2759"/>
<dbReference type="TreeFam" id="TF314097"/>
<dbReference type="Proteomes" id="UP000001595">
    <property type="component" value="Chromosome 15"/>
</dbReference>
<dbReference type="GO" id="GO:0010008">
    <property type="term" value="C:endosome membrane"/>
    <property type="evidence" value="ECO:0000250"/>
    <property type="project" value="UniProtKB"/>
</dbReference>
<dbReference type="GO" id="GO:0045335">
    <property type="term" value="C:phagocytic vesicle"/>
    <property type="evidence" value="ECO:0000250"/>
    <property type="project" value="UniProtKB"/>
</dbReference>
<dbReference type="GO" id="GO:0030670">
    <property type="term" value="C:phagocytic vesicle membrane"/>
    <property type="evidence" value="ECO:0007669"/>
    <property type="project" value="UniProtKB-SubCell"/>
</dbReference>
<dbReference type="GO" id="GO:0005886">
    <property type="term" value="C:plasma membrane"/>
    <property type="evidence" value="ECO:0007669"/>
    <property type="project" value="UniProtKB-SubCell"/>
</dbReference>
<dbReference type="GO" id="GO:0019003">
    <property type="term" value="F:GDP binding"/>
    <property type="evidence" value="ECO:0000250"/>
    <property type="project" value="UniProtKB"/>
</dbReference>
<dbReference type="GO" id="GO:0005525">
    <property type="term" value="F:GTP binding"/>
    <property type="evidence" value="ECO:0007669"/>
    <property type="project" value="UniProtKB-KW"/>
</dbReference>
<dbReference type="GO" id="GO:0003924">
    <property type="term" value="F:GTPase activity"/>
    <property type="evidence" value="ECO:0007669"/>
    <property type="project" value="InterPro"/>
</dbReference>
<dbReference type="GO" id="GO:0150115">
    <property type="term" value="P:cell-substrate junction organization"/>
    <property type="evidence" value="ECO:0000250"/>
    <property type="project" value="UniProtKB"/>
</dbReference>
<dbReference type="GO" id="GO:0015031">
    <property type="term" value="P:protein transport"/>
    <property type="evidence" value="ECO:0007669"/>
    <property type="project" value="UniProtKB-KW"/>
</dbReference>
<dbReference type="CDD" id="cd01867">
    <property type="entry name" value="Rab8_Rab10_Rab13_like"/>
    <property type="match status" value="1"/>
</dbReference>
<dbReference type="FunFam" id="3.40.50.300:FF:000202">
    <property type="entry name" value="ras-related protein Rab-8A"/>
    <property type="match status" value="1"/>
</dbReference>
<dbReference type="Gene3D" id="3.40.50.300">
    <property type="entry name" value="P-loop containing nucleotide triphosphate hydrolases"/>
    <property type="match status" value="1"/>
</dbReference>
<dbReference type="InterPro" id="IPR027417">
    <property type="entry name" value="P-loop_NTPase"/>
</dbReference>
<dbReference type="InterPro" id="IPR005225">
    <property type="entry name" value="Small_GTP-bd"/>
</dbReference>
<dbReference type="InterPro" id="IPR001806">
    <property type="entry name" value="Small_GTPase"/>
</dbReference>
<dbReference type="InterPro" id="IPR050305">
    <property type="entry name" value="Small_GTPase_Rab"/>
</dbReference>
<dbReference type="NCBIfam" id="TIGR00231">
    <property type="entry name" value="small_GTP"/>
    <property type="match status" value="1"/>
</dbReference>
<dbReference type="PANTHER" id="PTHR47980">
    <property type="entry name" value="LD44762P"/>
    <property type="match status" value="1"/>
</dbReference>
<dbReference type="Pfam" id="PF00071">
    <property type="entry name" value="Ras"/>
    <property type="match status" value="1"/>
</dbReference>
<dbReference type="PRINTS" id="PR00449">
    <property type="entry name" value="RASTRNSFRMNG"/>
</dbReference>
<dbReference type="SMART" id="SM00177">
    <property type="entry name" value="ARF"/>
    <property type="match status" value="1"/>
</dbReference>
<dbReference type="SMART" id="SM00175">
    <property type="entry name" value="RAB"/>
    <property type="match status" value="1"/>
</dbReference>
<dbReference type="SMART" id="SM00176">
    <property type="entry name" value="RAN"/>
    <property type="match status" value="1"/>
</dbReference>
<dbReference type="SMART" id="SM00173">
    <property type="entry name" value="RAS"/>
    <property type="match status" value="1"/>
</dbReference>
<dbReference type="SMART" id="SM00174">
    <property type="entry name" value="RHO"/>
    <property type="match status" value="1"/>
</dbReference>
<dbReference type="SUPFAM" id="SSF52540">
    <property type="entry name" value="P-loop containing nucleoside triphosphate hydrolases"/>
    <property type="match status" value="1"/>
</dbReference>
<dbReference type="PROSITE" id="PS51419">
    <property type="entry name" value="RAB"/>
    <property type="match status" value="1"/>
</dbReference>
<comment type="function">
    <text evidence="2 5 6">The small GTPases Rab are key regulators of intracellular membrane trafficking, from the formation of transport vesicles to their fusion with membranes. Rabs cycle between an inactive GDP-bound form and an active GTP-bound form that is able to recruit to membranes different sets of downstream effectors directly responsible for vesicle formation, movement, tethering and fusion (By similarity). RAB8B may be involved in polarized vesicular trafficking and neurotransmitter release (By similarity). May participate in cell junction dynamics in Sertoli cells (By similarity). May also participate in the export of a subset of neosynthesized proteins through a Rab8-Rab10-Rab11-dependent endososomal export route (By similarity).</text>
</comment>
<comment type="catalytic activity">
    <reaction evidence="2">
        <text>GTP + H2O = GDP + phosphate + H(+)</text>
        <dbReference type="Rhea" id="RHEA:19669"/>
        <dbReference type="ChEBI" id="CHEBI:15377"/>
        <dbReference type="ChEBI" id="CHEBI:15378"/>
        <dbReference type="ChEBI" id="CHEBI:37565"/>
        <dbReference type="ChEBI" id="CHEBI:43474"/>
        <dbReference type="ChEBI" id="CHEBI:58189"/>
        <dbReference type="EC" id="3.6.5.2"/>
    </reaction>
    <physiologicalReaction direction="left-to-right" evidence="2">
        <dbReference type="Rhea" id="RHEA:19670"/>
    </physiologicalReaction>
</comment>
<comment type="cofactor">
    <cofactor evidence="2">
        <name>Mg(2+)</name>
        <dbReference type="ChEBI" id="CHEBI:18420"/>
    </cofactor>
</comment>
<comment type="activity regulation">
    <text evidence="6">Regulated by guanine nucleotide exchange factors (GEFs) including RAB3IP/RABIN8 which promotes the exchange of bound GDP for free GTP. Regulated by GTPase activating proteins (GAPs) which increase the GTP hydrolysis activity. Inhibited by GDP dissociation inhibitors (GDIs).</text>
</comment>
<comment type="subunit">
    <text evidence="3 5 6">Associated with actin, delta-catenin and alpha and beta tubulins (By similarity). Interacts with OTOF (By similarity). Interacts with PEX5R (By similarity). Interacts with RAB3IP (By similarity). Interacts with VIM (By similarity). Interacts with CDH1 (By similarity). Interacts with MICALL2 (By similarity). Interacts with GDI1, GDI2, CHML and CHM; phosphorylation at Thr-72 disrupts these interactions (By similarity). Interacts with MICAL1 (By similarity).</text>
</comment>
<comment type="subcellular location">
    <subcellularLocation>
        <location evidence="1">Cell membrane</location>
        <topology evidence="1">Lipid-anchor</topology>
        <orientation evidence="1">Cytoplasmic side</orientation>
    </subcellularLocation>
    <subcellularLocation>
        <location evidence="1">Cytoplasmic vesicle</location>
        <location evidence="1">Phagosome membrane</location>
        <topology evidence="1">Lipid-anchor</topology>
        <orientation evidence="1">Cytoplasmic side</orientation>
    </subcellularLocation>
    <subcellularLocation>
        <location evidence="6">Endosome membrane</location>
    </subcellularLocation>
    <text evidence="1">Recruited to phagosomes containing S.aureus or Mycobacterium.</text>
</comment>
<comment type="domain">
    <text evidence="4">Switch 1, switch 2 and the interswitch regions are characteristic of Rab GTPases and mediate the interactions with Rab downstream effectors. The switch regions undergo conformational changes upon nucleotide binding which drives interaction with specific sets of effector proteins, with most effectors only binding to GTP-bound Rab.</text>
</comment>
<comment type="PTM">
    <text evidence="6">Phosphorylation of Thr-72 in the switch II region by LRRK2 prevents the association of RAB regulatory proteins, including CHM, CHML and RAB GDP dissociation inhibitors GDI1 and GDI2.</text>
</comment>
<comment type="similarity">
    <text evidence="8">Belongs to the small GTPase superfamily. Rab family.</text>
</comment>
<accession>Q5REC9</accession>